<organism>
    <name type="scientific">Marinomonas sp. (strain MWYL1)</name>
    <dbReference type="NCBI Taxonomy" id="400668"/>
    <lineage>
        <taxon>Bacteria</taxon>
        <taxon>Pseudomonadati</taxon>
        <taxon>Pseudomonadota</taxon>
        <taxon>Gammaproteobacteria</taxon>
        <taxon>Oceanospirillales</taxon>
        <taxon>Oceanospirillaceae</taxon>
        <taxon>Marinomonas</taxon>
    </lineage>
</organism>
<keyword id="KW-0378">Hydrolase</keyword>
<keyword id="KW-0479">Metal-binding</keyword>
<keyword id="KW-0665">Pyrimidine biosynthesis</keyword>
<keyword id="KW-0862">Zinc</keyword>
<proteinExistence type="inferred from homology"/>
<reference key="1">
    <citation type="submission" date="2007-06" db="EMBL/GenBank/DDBJ databases">
        <title>Complete sequence of Marinomonas sp. MWYL1.</title>
        <authorList>
            <consortium name="US DOE Joint Genome Institute"/>
            <person name="Copeland A."/>
            <person name="Lucas S."/>
            <person name="Lapidus A."/>
            <person name="Barry K."/>
            <person name="Glavina del Rio T."/>
            <person name="Dalin E."/>
            <person name="Tice H."/>
            <person name="Pitluck S."/>
            <person name="Kiss H."/>
            <person name="Brettin T."/>
            <person name="Bruce D."/>
            <person name="Detter J.C."/>
            <person name="Han C."/>
            <person name="Schmutz J."/>
            <person name="Larimer F."/>
            <person name="Land M."/>
            <person name="Hauser L."/>
            <person name="Kyrpides N."/>
            <person name="Kim E."/>
            <person name="Johnston A.W.B."/>
            <person name="Todd J.D."/>
            <person name="Rogers R."/>
            <person name="Wexler M."/>
            <person name="Bond P.L."/>
            <person name="Li Y."/>
            <person name="Richardson P."/>
        </authorList>
    </citation>
    <scope>NUCLEOTIDE SEQUENCE [LARGE SCALE GENOMIC DNA]</scope>
    <source>
        <strain>MWYL1</strain>
    </source>
</reference>
<gene>
    <name evidence="1" type="primary">pyrC</name>
    <name type="ordered locus">Mmwyl1_2376</name>
</gene>
<accession>A6VXW9</accession>
<feature type="chain" id="PRO_1000078097" description="Dihydroorotase">
    <location>
        <begin position="1"/>
        <end position="343"/>
    </location>
</feature>
<feature type="active site" evidence="1">
    <location>
        <position position="246"/>
    </location>
</feature>
<feature type="binding site" evidence="1">
    <location>
        <position position="13"/>
    </location>
    <ligand>
        <name>Zn(2+)</name>
        <dbReference type="ChEBI" id="CHEBI:29105"/>
        <label>1</label>
    </ligand>
</feature>
<feature type="binding site" evidence="1">
    <location>
        <begin position="15"/>
        <end position="17"/>
    </location>
    <ligand>
        <name>substrate</name>
    </ligand>
</feature>
<feature type="binding site" evidence="1">
    <location>
        <position position="15"/>
    </location>
    <ligand>
        <name>Zn(2+)</name>
        <dbReference type="ChEBI" id="CHEBI:29105"/>
        <label>1</label>
    </ligand>
</feature>
<feature type="binding site" evidence="1">
    <location>
        <position position="41"/>
    </location>
    <ligand>
        <name>substrate</name>
    </ligand>
</feature>
<feature type="binding site" description="via carbamate group" evidence="1">
    <location>
        <position position="98"/>
    </location>
    <ligand>
        <name>Zn(2+)</name>
        <dbReference type="ChEBI" id="CHEBI:29105"/>
        <label>1</label>
    </ligand>
</feature>
<feature type="binding site" description="via carbamate group" evidence="1">
    <location>
        <position position="98"/>
    </location>
    <ligand>
        <name>Zn(2+)</name>
        <dbReference type="ChEBI" id="CHEBI:29105"/>
        <label>2</label>
    </ligand>
</feature>
<feature type="binding site" evidence="1">
    <location>
        <position position="135"/>
    </location>
    <ligand>
        <name>substrate</name>
    </ligand>
</feature>
<feature type="binding site" evidence="1">
    <location>
        <position position="135"/>
    </location>
    <ligand>
        <name>Zn(2+)</name>
        <dbReference type="ChEBI" id="CHEBI:29105"/>
        <label>2</label>
    </ligand>
</feature>
<feature type="binding site" evidence="1">
    <location>
        <position position="173"/>
    </location>
    <ligand>
        <name>Zn(2+)</name>
        <dbReference type="ChEBI" id="CHEBI:29105"/>
        <label>2</label>
    </ligand>
</feature>
<feature type="binding site" evidence="1">
    <location>
        <position position="218"/>
    </location>
    <ligand>
        <name>substrate</name>
    </ligand>
</feature>
<feature type="binding site" evidence="1">
    <location>
        <position position="246"/>
    </location>
    <ligand>
        <name>Zn(2+)</name>
        <dbReference type="ChEBI" id="CHEBI:29105"/>
        <label>1</label>
    </ligand>
</feature>
<feature type="binding site" evidence="1">
    <location>
        <position position="250"/>
    </location>
    <ligand>
        <name>substrate</name>
    </ligand>
</feature>
<feature type="binding site" evidence="1">
    <location>
        <position position="262"/>
    </location>
    <ligand>
        <name>substrate</name>
    </ligand>
</feature>
<feature type="modified residue" description="N6-carboxylysine" evidence="1">
    <location>
        <position position="98"/>
    </location>
</feature>
<dbReference type="EC" id="3.5.2.3" evidence="1"/>
<dbReference type="EMBL" id="CP000749">
    <property type="protein sequence ID" value="ABR71298.1"/>
    <property type="molecule type" value="Genomic_DNA"/>
</dbReference>
<dbReference type="SMR" id="A6VXW9"/>
<dbReference type="STRING" id="400668.Mmwyl1_2376"/>
<dbReference type="KEGG" id="mmw:Mmwyl1_2376"/>
<dbReference type="eggNOG" id="COG0418">
    <property type="taxonomic scope" value="Bacteria"/>
</dbReference>
<dbReference type="HOGENOM" id="CLU_041558_1_0_6"/>
<dbReference type="OrthoDB" id="9808095at2"/>
<dbReference type="UniPathway" id="UPA00070">
    <property type="reaction ID" value="UER00117"/>
</dbReference>
<dbReference type="GO" id="GO:0005829">
    <property type="term" value="C:cytosol"/>
    <property type="evidence" value="ECO:0007669"/>
    <property type="project" value="TreeGrafter"/>
</dbReference>
<dbReference type="GO" id="GO:0004151">
    <property type="term" value="F:dihydroorotase activity"/>
    <property type="evidence" value="ECO:0007669"/>
    <property type="project" value="UniProtKB-UniRule"/>
</dbReference>
<dbReference type="GO" id="GO:0008270">
    <property type="term" value="F:zinc ion binding"/>
    <property type="evidence" value="ECO:0007669"/>
    <property type="project" value="UniProtKB-UniRule"/>
</dbReference>
<dbReference type="GO" id="GO:0006207">
    <property type="term" value="P:'de novo' pyrimidine nucleobase biosynthetic process"/>
    <property type="evidence" value="ECO:0007669"/>
    <property type="project" value="TreeGrafter"/>
</dbReference>
<dbReference type="GO" id="GO:0044205">
    <property type="term" value="P:'de novo' UMP biosynthetic process"/>
    <property type="evidence" value="ECO:0007669"/>
    <property type="project" value="UniProtKB-UniRule"/>
</dbReference>
<dbReference type="CDD" id="cd01294">
    <property type="entry name" value="DHOase"/>
    <property type="match status" value="1"/>
</dbReference>
<dbReference type="FunFam" id="3.20.20.140:FF:000006">
    <property type="entry name" value="Dihydroorotase"/>
    <property type="match status" value="1"/>
</dbReference>
<dbReference type="Gene3D" id="3.20.20.140">
    <property type="entry name" value="Metal-dependent hydrolases"/>
    <property type="match status" value="1"/>
</dbReference>
<dbReference type="HAMAP" id="MF_00219">
    <property type="entry name" value="PyrC_classII"/>
    <property type="match status" value="1"/>
</dbReference>
<dbReference type="InterPro" id="IPR006680">
    <property type="entry name" value="Amidohydro-rel"/>
</dbReference>
<dbReference type="InterPro" id="IPR004721">
    <property type="entry name" value="DHOdimr"/>
</dbReference>
<dbReference type="InterPro" id="IPR002195">
    <property type="entry name" value="Dihydroorotase_CS"/>
</dbReference>
<dbReference type="InterPro" id="IPR032466">
    <property type="entry name" value="Metal_Hydrolase"/>
</dbReference>
<dbReference type="NCBIfam" id="TIGR00856">
    <property type="entry name" value="pyrC_dimer"/>
    <property type="match status" value="1"/>
</dbReference>
<dbReference type="PANTHER" id="PTHR43137">
    <property type="entry name" value="DIHYDROOROTASE"/>
    <property type="match status" value="1"/>
</dbReference>
<dbReference type="PANTHER" id="PTHR43137:SF1">
    <property type="entry name" value="DIHYDROOROTASE"/>
    <property type="match status" value="1"/>
</dbReference>
<dbReference type="Pfam" id="PF01979">
    <property type="entry name" value="Amidohydro_1"/>
    <property type="match status" value="1"/>
</dbReference>
<dbReference type="PIRSF" id="PIRSF001237">
    <property type="entry name" value="DHOdimr"/>
    <property type="match status" value="1"/>
</dbReference>
<dbReference type="SUPFAM" id="SSF51556">
    <property type="entry name" value="Metallo-dependent hydrolases"/>
    <property type="match status" value="1"/>
</dbReference>
<dbReference type="PROSITE" id="PS00483">
    <property type="entry name" value="DIHYDROOROTASE_2"/>
    <property type="match status" value="1"/>
</dbReference>
<sequence length="343" mass="38087">MNEITIIKPDDWHLHFRDQDMLLETVAATARCFERAVVMPNLVPPVTTAELALSYKERILAARPAGSTFMPVMTIYLTDKTSVQDIQDAKKAGVLAAKMYPAGATTNSDSGVNSLESLYPVFEALADNGMLLLIHGEVTQKHIDIFDREKEFIDQHMVNIVDRVPNLKVVFEHITTKDAVDFVLAARDGVAATITPQHLLLNRNDMLDGGVRPHNYCLPVLKRSTHQQALREVVKSGSPKFFLGTDSAPHAKHRKESDCGCAGCYSAWSALELYTQVFDELGALDKLEGFASLYGADFYGLPRNTEKVTLVRESWEVPNSITLPNGEPIVPFFAGKQISWKLK</sequence>
<evidence type="ECO:0000255" key="1">
    <source>
        <dbReference type="HAMAP-Rule" id="MF_00219"/>
    </source>
</evidence>
<comment type="function">
    <text evidence="1">Catalyzes the reversible cyclization of carbamoyl aspartate to dihydroorotate.</text>
</comment>
<comment type="catalytic activity">
    <reaction evidence="1">
        <text>(S)-dihydroorotate + H2O = N-carbamoyl-L-aspartate + H(+)</text>
        <dbReference type="Rhea" id="RHEA:24296"/>
        <dbReference type="ChEBI" id="CHEBI:15377"/>
        <dbReference type="ChEBI" id="CHEBI:15378"/>
        <dbReference type="ChEBI" id="CHEBI:30864"/>
        <dbReference type="ChEBI" id="CHEBI:32814"/>
        <dbReference type="EC" id="3.5.2.3"/>
    </reaction>
</comment>
<comment type="cofactor">
    <cofactor evidence="1">
        <name>Zn(2+)</name>
        <dbReference type="ChEBI" id="CHEBI:29105"/>
    </cofactor>
    <text evidence="1">Binds 2 Zn(2+) ions per subunit.</text>
</comment>
<comment type="pathway">
    <text evidence="1">Pyrimidine metabolism; UMP biosynthesis via de novo pathway; (S)-dihydroorotate from bicarbonate: step 3/3.</text>
</comment>
<comment type="subunit">
    <text evidence="1">Homodimer.</text>
</comment>
<comment type="similarity">
    <text evidence="1">Belongs to the metallo-dependent hydrolases superfamily. DHOase family. Class II DHOase subfamily.</text>
</comment>
<protein>
    <recommendedName>
        <fullName evidence="1">Dihydroorotase</fullName>
        <shortName evidence="1">DHOase</shortName>
        <ecNumber evidence="1">3.5.2.3</ecNumber>
    </recommendedName>
</protein>
<name>PYRC_MARMS</name>